<sequence>MNPGIEKYEIRFDFDLKDFTYTSHERIHLAGDWKDIKLDAVRLSVDKVTCNGQPMRFETGQDTVTVKGSFHDKDVIDIDFHAKVSDTLMGLYLSRTKEGTMITTQFESNGARMAFPCVDHPAYKAVFAITVVIDKDYDAISNMPPKRIEVSERKIVEFQDTPKMSTYLLYIGVGKFKYATDKYRDIDLILVSLKDIKSKYPLEIARKSIEFYESYFGIPYALPKMHLISVPEFGAGAMENWGAITFREVALMATENSGSIMKQNAAITIAHEIAHQWFGDLVTMKWWNDLWLNESFATFMSYKTVDSFSKQWDVFADFIRSETGGALRSDSLKNTHPIEVDVKDPDEISQIFDEISYGKGASILRMIEDYAGYEEFRKGISKYLNDHRYGNAEGSDLWTAIEDVSGKPVKRVMEYWIKNPGYPVVSVVKSGNKFRLTQEQFFLDGTRGQGKWPIPLTVMTKSGKKAMLMEESAEIEDMVKVNVNSSGFYRVSYDGESFETVMKNYSKLSNLDRWGLISDLYAFLISGRVSVDDYLARIKGFFEDSDHLIVEEIASQLTGLYLLKPDSNRIRETAASYLSRQVVALGDKQKGEDDKISKIRGIVTQDLAMVDDHFASDLARKFSTLAEDPDLALAKSIAAAKAYGISELASAADKYTDDEIRVRIIAAMGWCSPSDLKSVFELIDKGTIRKQDMLYVFSNMPANPKGRDFFFSNIDRIVALMEHAFEGTGYTSRILETAIPYLGLARYEDVKKKAEQIRKPSYNVGINKGLETLEIVRKLYNKL</sequence>
<reference key="1">
    <citation type="journal article" date="1998" name="Cell">
        <title>The role of tricorn protease and its aminopeptidase-interacting factors in cellular protein degradation.</title>
        <authorList>
            <person name="Tamura N."/>
            <person name="Lottspeich F."/>
            <person name="Baumeister W."/>
            <person name="Tamura T."/>
        </authorList>
    </citation>
    <scope>NUCLEOTIDE SEQUENCE [GENOMIC DNA]</scope>
    <scope>PROTEIN SEQUENCE OF 1-21; 334-360; 411-418; 434-448; 453-460 AND 678-685</scope>
    <source>
        <strain>ATCC 25905 / DSM 1728 / JCM 9062 / NBRC 15155 / AMRC-C165</strain>
    </source>
</reference>
<reference key="2">
    <citation type="journal article" date="2000" name="Nature">
        <title>The genome sequence of the thermoacidophilic scavenger Thermoplasma acidophilum.</title>
        <authorList>
            <person name="Ruepp A."/>
            <person name="Graml W."/>
            <person name="Santos-Martinez M.-L."/>
            <person name="Koretke K.K."/>
            <person name="Volker C."/>
            <person name="Mewes H.-W."/>
            <person name="Frishman D."/>
            <person name="Stocker S."/>
            <person name="Lupas A.N."/>
            <person name="Baumeister W."/>
        </authorList>
    </citation>
    <scope>NUCLEOTIDE SEQUENCE [LARGE SCALE GENOMIC DNA]</scope>
    <source>
        <strain>ATCC 25905 / DSM 1728 / JCM 9062 / NBRC 15155 / AMRC-C165</strain>
    </source>
</reference>
<evidence type="ECO:0000250" key="1"/>
<evidence type="ECO:0000255" key="2">
    <source>
        <dbReference type="PROSITE-ProRule" id="PRU10095"/>
    </source>
</evidence>
<evidence type="ECO:0000305" key="3"/>
<dbReference type="EC" id="3.4.11.-"/>
<dbReference type="EMBL" id="AF081951">
    <property type="protein sequence ID" value="AAC98289.1"/>
    <property type="molecule type" value="Genomic_DNA"/>
</dbReference>
<dbReference type="EMBL" id="AL445063">
    <property type="protein sequence ID" value="CAC11446.1"/>
    <property type="molecule type" value="Genomic_DNA"/>
</dbReference>
<dbReference type="PIR" id="T37457">
    <property type="entry name" value="T37457"/>
</dbReference>
<dbReference type="RefSeq" id="WP_010900730.1">
    <property type="nucleotide sequence ID" value="NC_002578.1"/>
</dbReference>
<dbReference type="SMR" id="O93654"/>
<dbReference type="FunCoup" id="O93654">
    <property type="interactions" value="101"/>
</dbReference>
<dbReference type="STRING" id="273075.gene:9571518"/>
<dbReference type="MEROPS" id="M01.020"/>
<dbReference type="PaxDb" id="273075-Ta0301"/>
<dbReference type="EnsemblBacteria" id="CAC11446">
    <property type="protein sequence ID" value="CAC11446"/>
    <property type="gene ID" value="CAC11446"/>
</dbReference>
<dbReference type="KEGG" id="tac:Ta0301"/>
<dbReference type="eggNOG" id="arCOG02969">
    <property type="taxonomic scope" value="Archaea"/>
</dbReference>
<dbReference type="HOGENOM" id="CLU_003705_0_3_2"/>
<dbReference type="InParanoid" id="O93654"/>
<dbReference type="OrthoDB" id="139771at2157"/>
<dbReference type="Proteomes" id="UP000001024">
    <property type="component" value="Chromosome"/>
</dbReference>
<dbReference type="GO" id="GO:0005737">
    <property type="term" value="C:cytoplasm"/>
    <property type="evidence" value="ECO:0007669"/>
    <property type="project" value="UniProtKB-SubCell"/>
</dbReference>
<dbReference type="GO" id="GO:0005615">
    <property type="term" value="C:extracellular space"/>
    <property type="evidence" value="ECO:0007669"/>
    <property type="project" value="TreeGrafter"/>
</dbReference>
<dbReference type="GO" id="GO:0016020">
    <property type="term" value="C:membrane"/>
    <property type="evidence" value="ECO:0007669"/>
    <property type="project" value="TreeGrafter"/>
</dbReference>
<dbReference type="GO" id="GO:0070006">
    <property type="term" value="F:metalloaminopeptidase activity"/>
    <property type="evidence" value="ECO:0007669"/>
    <property type="project" value="TreeGrafter"/>
</dbReference>
<dbReference type="GO" id="GO:0042277">
    <property type="term" value="F:peptide binding"/>
    <property type="evidence" value="ECO:0007669"/>
    <property type="project" value="TreeGrafter"/>
</dbReference>
<dbReference type="GO" id="GO:0008270">
    <property type="term" value="F:zinc ion binding"/>
    <property type="evidence" value="ECO:0007669"/>
    <property type="project" value="InterPro"/>
</dbReference>
<dbReference type="GO" id="GO:0043171">
    <property type="term" value="P:peptide catabolic process"/>
    <property type="evidence" value="ECO:0007669"/>
    <property type="project" value="TreeGrafter"/>
</dbReference>
<dbReference type="GO" id="GO:0006508">
    <property type="term" value="P:proteolysis"/>
    <property type="evidence" value="ECO:0007669"/>
    <property type="project" value="UniProtKB-KW"/>
</dbReference>
<dbReference type="CDD" id="cd09601">
    <property type="entry name" value="M1_APN-Q_like"/>
    <property type="match status" value="1"/>
</dbReference>
<dbReference type="FunFam" id="1.10.390.10:FF:000006">
    <property type="entry name" value="Puromycin-sensitive aminopeptidase"/>
    <property type="match status" value="1"/>
</dbReference>
<dbReference type="Gene3D" id="1.25.50.20">
    <property type="match status" value="1"/>
</dbReference>
<dbReference type="Gene3D" id="2.60.40.1910">
    <property type="match status" value="1"/>
</dbReference>
<dbReference type="Gene3D" id="1.10.390.10">
    <property type="entry name" value="Neutral Protease Domain 2"/>
    <property type="match status" value="1"/>
</dbReference>
<dbReference type="Gene3D" id="2.60.40.1730">
    <property type="entry name" value="tricorn interacting facor f3 domain"/>
    <property type="match status" value="1"/>
</dbReference>
<dbReference type="InterPro" id="IPR045357">
    <property type="entry name" value="Aminopeptidase_N-like_N"/>
</dbReference>
<dbReference type="InterPro" id="IPR042097">
    <property type="entry name" value="Aminopeptidase_N-like_N_sf"/>
</dbReference>
<dbReference type="InterPro" id="IPR024571">
    <property type="entry name" value="ERAP1-like_C_dom"/>
</dbReference>
<dbReference type="InterPro" id="IPR034016">
    <property type="entry name" value="M1_APN-typ"/>
</dbReference>
<dbReference type="InterPro" id="IPR001930">
    <property type="entry name" value="Peptidase_M1"/>
</dbReference>
<dbReference type="InterPro" id="IPR050344">
    <property type="entry name" value="Peptidase_M1_aminopeptidases"/>
</dbReference>
<dbReference type="InterPro" id="IPR014782">
    <property type="entry name" value="Peptidase_M1_dom"/>
</dbReference>
<dbReference type="InterPro" id="IPR027268">
    <property type="entry name" value="Peptidase_M4/M1_CTD_sf"/>
</dbReference>
<dbReference type="PANTHER" id="PTHR11533">
    <property type="entry name" value="PROTEASE M1 ZINC METALLOPROTEASE"/>
    <property type="match status" value="1"/>
</dbReference>
<dbReference type="PANTHER" id="PTHR11533:SF174">
    <property type="entry name" value="PUROMYCIN-SENSITIVE AMINOPEPTIDASE-RELATED"/>
    <property type="match status" value="1"/>
</dbReference>
<dbReference type="Pfam" id="PF11838">
    <property type="entry name" value="ERAP1_C"/>
    <property type="match status" value="1"/>
</dbReference>
<dbReference type="Pfam" id="PF01433">
    <property type="entry name" value="Peptidase_M1"/>
    <property type="match status" value="1"/>
</dbReference>
<dbReference type="Pfam" id="PF17900">
    <property type="entry name" value="Peptidase_M1_N"/>
    <property type="match status" value="1"/>
</dbReference>
<dbReference type="PRINTS" id="PR00756">
    <property type="entry name" value="ALADIPTASE"/>
</dbReference>
<dbReference type="SUPFAM" id="SSF63737">
    <property type="entry name" value="Leukotriene A4 hydrolase N-terminal domain"/>
    <property type="match status" value="1"/>
</dbReference>
<dbReference type="SUPFAM" id="SSF55486">
    <property type="entry name" value="Metalloproteases ('zincins'), catalytic domain"/>
    <property type="match status" value="1"/>
</dbReference>
<dbReference type="PROSITE" id="PS00142">
    <property type="entry name" value="ZINC_PROTEASE"/>
    <property type="match status" value="1"/>
</dbReference>
<protein>
    <recommendedName>
        <fullName>Tricorn protease-interacting factor F2</fullName>
        <ecNumber>3.4.11.-</ecNumber>
    </recommendedName>
</protein>
<accession>O93654</accession>
<proteinExistence type="evidence at protein level"/>
<gene>
    <name type="primary">trf2</name>
    <name type="ordered locus">Ta0301</name>
</gene>
<organism>
    <name type="scientific">Thermoplasma acidophilum (strain ATCC 25905 / DSM 1728 / JCM 9062 / NBRC 15155 / AMRC-C165)</name>
    <dbReference type="NCBI Taxonomy" id="273075"/>
    <lineage>
        <taxon>Archaea</taxon>
        <taxon>Methanobacteriati</taxon>
        <taxon>Thermoplasmatota</taxon>
        <taxon>Thermoplasmata</taxon>
        <taxon>Thermoplasmatales</taxon>
        <taxon>Thermoplasmataceae</taxon>
        <taxon>Thermoplasma</taxon>
    </lineage>
</organism>
<keyword id="KW-0031">Aminopeptidase</keyword>
<keyword id="KW-0963">Cytoplasm</keyword>
<keyword id="KW-0903">Direct protein sequencing</keyword>
<keyword id="KW-0378">Hydrolase</keyword>
<keyword id="KW-0479">Metal-binding</keyword>
<keyword id="KW-0482">Metalloprotease</keyword>
<keyword id="KW-0645">Protease</keyword>
<keyword id="KW-1185">Reference proteome</keyword>
<keyword id="KW-0862">Zinc</keyword>
<name>TRF2_THEAC</name>
<feature type="chain" id="PRO_0000095110" description="Tricorn protease-interacting factor F2">
    <location>
        <begin position="1"/>
        <end position="783"/>
    </location>
</feature>
<feature type="active site" description="Proton acceptor" evidence="2">
    <location>
        <position position="272"/>
    </location>
</feature>
<feature type="binding site" evidence="1">
    <location>
        <position position="107"/>
    </location>
    <ligand>
        <name>substrate</name>
    </ligand>
</feature>
<feature type="binding site" evidence="1">
    <location>
        <begin position="236"/>
        <end position="240"/>
    </location>
    <ligand>
        <name>substrate</name>
    </ligand>
</feature>
<feature type="binding site" evidence="2">
    <location>
        <position position="271"/>
    </location>
    <ligand>
        <name>Zn(2+)</name>
        <dbReference type="ChEBI" id="CHEBI:29105"/>
        <note>catalytic</note>
    </ligand>
</feature>
<feature type="binding site" evidence="2">
    <location>
        <position position="275"/>
    </location>
    <ligand>
        <name>Zn(2+)</name>
        <dbReference type="ChEBI" id="CHEBI:29105"/>
        <note>catalytic</note>
    </ligand>
</feature>
<feature type="binding site" evidence="2">
    <location>
        <position position="294"/>
    </location>
    <ligand>
        <name>Zn(2+)</name>
        <dbReference type="ChEBI" id="CHEBI:29105"/>
        <note>catalytic</note>
    </ligand>
</feature>
<feature type="site" description="Transition state stabilizer" evidence="1">
    <location>
        <position position="357"/>
    </location>
</feature>
<comment type="function">
    <text>Proteases F1, F2 and F3 degrade oligopeptides produced by Tricorn (themselves probably produced by the proteasome), yielding free amino acids.</text>
</comment>
<comment type="cofactor">
    <cofactor evidence="1">
        <name>Zn(2+)</name>
        <dbReference type="ChEBI" id="CHEBI:29105"/>
    </cofactor>
    <text evidence="1">Binds 1 zinc ion per subunit.</text>
</comment>
<comment type="subunit">
    <text>Monomer. Part of the Tricorn proteolytic complex.</text>
</comment>
<comment type="subcellular location">
    <subcellularLocation>
        <location>Cytoplasm</location>
    </subcellularLocation>
</comment>
<comment type="similarity">
    <text evidence="3">Belongs to the peptidase M1 family.</text>
</comment>